<feature type="chain" id="PRO_1000099464" description="UvrABC system protein C">
    <location>
        <begin position="1"/>
        <end position="682"/>
    </location>
</feature>
<feature type="domain" description="GIY-YIG" evidence="1">
    <location>
        <begin position="22"/>
        <end position="100"/>
    </location>
</feature>
<feature type="domain" description="UVR" evidence="1">
    <location>
        <begin position="209"/>
        <end position="244"/>
    </location>
</feature>
<gene>
    <name evidence="1" type="primary">uvrC</name>
    <name type="ordered locus">Bcenmc03_1101</name>
</gene>
<name>UVRC_BURO0</name>
<keyword id="KW-0963">Cytoplasm</keyword>
<keyword id="KW-0227">DNA damage</keyword>
<keyword id="KW-0228">DNA excision</keyword>
<keyword id="KW-0234">DNA repair</keyword>
<keyword id="KW-0267">Excision nuclease</keyword>
<keyword id="KW-0742">SOS response</keyword>
<reference key="1">
    <citation type="submission" date="2008-02" db="EMBL/GenBank/DDBJ databases">
        <title>Complete sequence of chromosome 1 of Burkholderia cenocepacia MC0-3.</title>
        <authorList>
            <person name="Copeland A."/>
            <person name="Lucas S."/>
            <person name="Lapidus A."/>
            <person name="Barry K."/>
            <person name="Bruce D."/>
            <person name="Goodwin L."/>
            <person name="Glavina del Rio T."/>
            <person name="Dalin E."/>
            <person name="Tice H."/>
            <person name="Pitluck S."/>
            <person name="Chain P."/>
            <person name="Malfatti S."/>
            <person name="Shin M."/>
            <person name="Vergez L."/>
            <person name="Schmutz J."/>
            <person name="Larimer F."/>
            <person name="Land M."/>
            <person name="Hauser L."/>
            <person name="Kyrpides N."/>
            <person name="Mikhailova N."/>
            <person name="Tiedje J."/>
            <person name="Richardson P."/>
        </authorList>
    </citation>
    <scope>NUCLEOTIDE SEQUENCE [LARGE SCALE GENOMIC DNA]</scope>
    <source>
        <strain>MC0-3</strain>
    </source>
</reference>
<proteinExistence type="inferred from homology"/>
<accession>B1JYC2</accession>
<dbReference type="EMBL" id="CP000958">
    <property type="protein sequence ID" value="ACA90278.1"/>
    <property type="molecule type" value="Genomic_DNA"/>
</dbReference>
<dbReference type="RefSeq" id="WP_006476485.1">
    <property type="nucleotide sequence ID" value="NC_010508.1"/>
</dbReference>
<dbReference type="SMR" id="B1JYC2"/>
<dbReference type="GeneID" id="83047895"/>
<dbReference type="KEGG" id="bcm:Bcenmc03_1101"/>
<dbReference type="HOGENOM" id="CLU_014841_3_0_4"/>
<dbReference type="Proteomes" id="UP000002169">
    <property type="component" value="Chromosome 1"/>
</dbReference>
<dbReference type="GO" id="GO:0005737">
    <property type="term" value="C:cytoplasm"/>
    <property type="evidence" value="ECO:0007669"/>
    <property type="project" value="UniProtKB-SubCell"/>
</dbReference>
<dbReference type="GO" id="GO:0009380">
    <property type="term" value="C:excinuclease repair complex"/>
    <property type="evidence" value="ECO:0007669"/>
    <property type="project" value="InterPro"/>
</dbReference>
<dbReference type="GO" id="GO:0003677">
    <property type="term" value="F:DNA binding"/>
    <property type="evidence" value="ECO:0007669"/>
    <property type="project" value="UniProtKB-UniRule"/>
</dbReference>
<dbReference type="GO" id="GO:0009381">
    <property type="term" value="F:excinuclease ABC activity"/>
    <property type="evidence" value="ECO:0007669"/>
    <property type="project" value="UniProtKB-UniRule"/>
</dbReference>
<dbReference type="GO" id="GO:0006289">
    <property type="term" value="P:nucleotide-excision repair"/>
    <property type="evidence" value="ECO:0007669"/>
    <property type="project" value="UniProtKB-UniRule"/>
</dbReference>
<dbReference type="GO" id="GO:0009432">
    <property type="term" value="P:SOS response"/>
    <property type="evidence" value="ECO:0007669"/>
    <property type="project" value="UniProtKB-UniRule"/>
</dbReference>
<dbReference type="CDD" id="cd10434">
    <property type="entry name" value="GIY-YIG_UvrC_Cho"/>
    <property type="match status" value="1"/>
</dbReference>
<dbReference type="FunFam" id="3.30.420.340:FF:000001">
    <property type="entry name" value="UvrABC system protein C"/>
    <property type="match status" value="1"/>
</dbReference>
<dbReference type="FunFam" id="3.40.1440.10:FF:000001">
    <property type="entry name" value="UvrABC system protein C"/>
    <property type="match status" value="1"/>
</dbReference>
<dbReference type="Gene3D" id="1.10.150.20">
    <property type="entry name" value="5' to 3' exonuclease, C-terminal subdomain"/>
    <property type="match status" value="1"/>
</dbReference>
<dbReference type="Gene3D" id="3.40.1440.10">
    <property type="entry name" value="GIY-YIG endonuclease"/>
    <property type="match status" value="1"/>
</dbReference>
<dbReference type="Gene3D" id="4.10.860.10">
    <property type="entry name" value="UVR domain"/>
    <property type="match status" value="1"/>
</dbReference>
<dbReference type="Gene3D" id="3.30.420.340">
    <property type="entry name" value="UvrC, RNAse H endonuclease domain"/>
    <property type="match status" value="1"/>
</dbReference>
<dbReference type="HAMAP" id="MF_00203">
    <property type="entry name" value="UvrC"/>
    <property type="match status" value="1"/>
</dbReference>
<dbReference type="InterPro" id="IPR000305">
    <property type="entry name" value="GIY-YIG_endonuc"/>
</dbReference>
<dbReference type="InterPro" id="IPR035901">
    <property type="entry name" value="GIY-YIG_endonuc_sf"/>
</dbReference>
<dbReference type="InterPro" id="IPR047296">
    <property type="entry name" value="GIY-YIG_UvrC_Cho"/>
</dbReference>
<dbReference type="InterPro" id="IPR003583">
    <property type="entry name" value="Hlx-hairpin-Hlx_DNA-bd_motif"/>
</dbReference>
<dbReference type="InterPro" id="IPR010994">
    <property type="entry name" value="RuvA_2-like"/>
</dbReference>
<dbReference type="InterPro" id="IPR001943">
    <property type="entry name" value="UVR_dom"/>
</dbReference>
<dbReference type="InterPro" id="IPR036876">
    <property type="entry name" value="UVR_dom_sf"/>
</dbReference>
<dbReference type="InterPro" id="IPR050066">
    <property type="entry name" value="UvrABC_protein_C"/>
</dbReference>
<dbReference type="InterPro" id="IPR004791">
    <property type="entry name" value="UvrC"/>
</dbReference>
<dbReference type="InterPro" id="IPR001162">
    <property type="entry name" value="UvrC_RNase_H_dom"/>
</dbReference>
<dbReference type="InterPro" id="IPR038476">
    <property type="entry name" value="UvrC_RNase_H_dom_sf"/>
</dbReference>
<dbReference type="NCBIfam" id="NF001824">
    <property type="entry name" value="PRK00558.1-5"/>
    <property type="match status" value="1"/>
</dbReference>
<dbReference type="NCBIfam" id="TIGR00194">
    <property type="entry name" value="uvrC"/>
    <property type="match status" value="1"/>
</dbReference>
<dbReference type="PANTHER" id="PTHR30562:SF1">
    <property type="entry name" value="UVRABC SYSTEM PROTEIN C"/>
    <property type="match status" value="1"/>
</dbReference>
<dbReference type="PANTHER" id="PTHR30562">
    <property type="entry name" value="UVRC/OXIDOREDUCTASE"/>
    <property type="match status" value="1"/>
</dbReference>
<dbReference type="Pfam" id="PF01541">
    <property type="entry name" value="GIY-YIG"/>
    <property type="match status" value="1"/>
</dbReference>
<dbReference type="Pfam" id="PF14520">
    <property type="entry name" value="HHH_5"/>
    <property type="match status" value="1"/>
</dbReference>
<dbReference type="Pfam" id="PF02151">
    <property type="entry name" value="UVR"/>
    <property type="match status" value="1"/>
</dbReference>
<dbReference type="Pfam" id="PF22920">
    <property type="entry name" value="UvrC_RNaseH"/>
    <property type="match status" value="2"/>
</dbReference>
<dbReference type="Pfam" id="PF08459">
    <property type="entry name" value="UvrC_RNaseH_dom"/>
    <property type="match status" value="1"/>
</dbReference>
<dbReference type="SMART" id="SM00465">
    <property type="entry name" value="GIYc"/>
    <property type="match status" value="1"/>
</dbReference>
<dbReference type="SMART" id="SM00278">
    <property type="entry name" value="HhH1"/>
    <property type="match status" value="2"/>
</dbReference>
<dbReference type="SUPFAM" id="SSF46600">
    <property type="entry name" value="C-terminal UvrC-binding domain of UvrB"/>
    <property type="match status" value="1"/>
</dbReference>
<dbReference type="SUPFAM" id="SSF82771">
    <property type="entry name" value="GIY-YIG endonuclease"/>
    <property type="match status" value="1"/>
</dbReference>
<dbReference type="SUPFAM" id="SSF47781">
    <property type="entry name" value="RuvA domain 2-like"/>
    <property type="match status" value="1"/>
</dbReference>
<dbReference type="PROSITE" id="PS50164">
    <property type="entry name" value="GIY_YIG"/>
    <property type="match status" value="1"/>
</dbReference>
<dbReference type="PROSITE" id="PS50151">
    <property type="entry name" value="UVR"/>
    <property type="match status" value="1"/>
</dbReference>
<dbReference type="PROSITE" id="PS50165">
    <property type="entry name" value="UVRC"/>
    <property type="match status" value="1"/>
</dbReference>
<sequence length="682" mass="74658">MTSPEASAIPFEPKKILAQLPHMPGVYRYYDTAGAVLYVGKARDLKKRVSSYFTKTQLSPRIAMMVTRIARIETTVTRSEAEALLLENNLIKALAPRYNILFRDDKSYPYLKLTAHRFPRMAYYRGSVDKQNQYFGPFPSAWAVRESIQILQRVFQLRTCEDSVFNNRTRPCLLHQIGRCTAPCVGAISDEDYAVDVSNAARFLLGRQSEVMKELEQKMHAFAAELKFEQAAAVRNQMSSLATVLHQQAIEVGSDSDVDILAVVAQGGRVCVNLAMVRGGRHLGDKAYFPTHVESALTLAEGGLGEEVEPAEAVDATADAPVDTVADQPAEEAGSARGAASAASVEAEVLDAFIAQHYLGNRVPPVLVVSHAPASRDLLELLSEQAGHKVSLVRQPQGQRRAWLSMAEQNARLALARLLSEQGSQQARTRALADTLSYDSDDLATLRIECFDISHTMGEATQASCVVYHHHKMQSSEYRRYNITGITPGDDYAAMRQVLTRRYEKMVEQAAQAAAVDEAAGIDGESTRQAEASSLLPNIVLIDGGKGQVEIARQVFTELGLDTSMLVGVAKGEGRKVGLETLVFADGRAPLELGKESAALMLVAQIRDEAHRFAITGMRAKRAKARQTSRLEELEGVGAKRRQRLLARFGGLRGVVAASVEELASVEGISHALAEQIYKQLH</sequence>
<organism>
    <name type="scientific">Burkholderia orbicola (strain MC0-3)</name>
    <dbReference type="NCBI Taxonomy" id="406425"/>
    <lineage>
        <taxon>Bacteria</taxon>
        <taxon>Pseudomonadati</taxon>
        <taxon>Pseudomonadota</taxon>
        <taxon>Betaproteobacteria</taxon>
        <taxon>Burkholderiales</taxon>
        <taxon>Burkholderiaceae</taxon>
        <taxon>Burkholderia</taxon>
        <taxon>Burkholderia cepacia complex</taxon>
        <taxon>Burkholderia orbicola</taxon>
    </lineage>
</organism>
<comment type="function">
    <text evidence="1">The UvrABC repair system catalyzes the recognition and processing of DNA lesions. UvrC both incises the 5' and 3' sides of the lesion. The N-terminal half is responsible for the 3' incision and the C-terminal half is responsible for the 5' incision.</text>
</comment>
<comment type="subunit">
    <text evidence="1">Interacts with UvrB in an incision complex.</text>
</comment>
<comment type="subcellular location">
    <subcellularLocation>
        <location evidence="1">Cytoplasm</location>
    </subcellularLocation>
</comment>
<comment type="similarity">
    <text evidence="1">Belongs to the UvrC family.</text>
</comment>
<protein>
    <recommendedName>
        <fullName evidence="1">UvrABC system protein C</fullName>
        <shortName evidence="1">Protein UvrC</shortName>
    </recommendedName>
    <alternativeName>
        <fullName evidence="1">Excinuclease ABC subunit C</fullName>
    </alternativeName>
</protein>
<evidence type="ECO:0000255" key="1">
    <source>
        <dbReference type="HAMAP-Rule" id="MF_00203"/>
    </source>
</evidence>